<organism>
    <name type="scientific">Shouchella clausii (strain KSM-K16)</name>
    <name type="common">Alkalihalobacillus clausii</name>
    <dbReference type="NCBI Taxonomy" id="66692"/>
    <lineage>
        <taxon>Bacteria</taxon>
        <taxon>Bacillati</taxon>
        <taxon>Bacillota</taxon>
        <taxon>Bacilli</taxon>
        <taxon>Bacillales</taxon>
        <taxon>Bacillaceae</taxon>
        <taxon>Shouchella</taxon>
    </lineage>
</organism>
<name>Y2405_SHOC1</name>
<dbReference type="EMBL" id="AP006627">
    <property type="protein sequence ID" value="BAD64940.1"/>
    <property type="molecule type" value="Genomic_DNA"/>
</dbReference>
<dbReference type="RefSeq" id="WP_011247248.1">
    <property type="nucleotide sequence ID" value="NC_006582.1"/>
</dbReference>
<dbReference type="SMR" id="Q5WFC0"/>
<dbReference type="STRING" id="66692.ABC2405"/>
<dbReference type="KEGG" id="bcl:ABC2405"/>
<dbReference type="eggNOG" id="COG4493">
    <property type="taxonomic scope" value="Bacteria"/>
</dbReference>
<dbReference type="HOGENOM" id="CLU_096059_0_0_9"/>
<dbReference type="OrthoDB" id="9812818at2"/>
<dbReference type="Proteomes" id="UP000001168">
    <property type="component" value="Chromosome"/>
</dbReference>
<dbReference type="Gene3D" id="3.30.930.20">
    <property type="entry name" value="Protein of unknown function DUF1054"/>
    <property type="match status" value="1"/>
</dbReference>
<dbReference type="HAMAP" id="MF_01851">
    <property type="entry name" value="UPF0637"/>
    <property type="match status" value="1"/>
</dbReference>
<dbReference type="InterPro" id="IPR009403">
    <property type="entry name" value="UPF0637"/>
</dbReference>
<dbReference type="InterPro" id="IPR053707">
    <property type="entry name" value="UPF0637_domain_sf"/>
</dbReference>
<dbReference type="Pfam" id="PF06335">
    <property type="entry name" value="DUF1054"/>
    <property type="match status" value="1"/>
</dbReference>
<dbReference type="PIRSF" id="PIRSF021332">
    <property type="entry name" value="DUF1054"/>
    <property type="match status" value="1"/>
</dbReference>
<dbReference type="SUPFAM" id="SSF142913">
    <property type="entry name" value="YktB/PF0168-like"/>
    <property type="match status" value="1"/>
</dbReference>
<feature type="chain" id="PRO_0000348294" description="UPF0637 protein ABC2405">
    <location>
        <begin position="1"/>
        <end position="211"/>
    </location>
</feature>
<comment type="similarity">
    <text evidence="1">Belongs to the UPF0637 family.</text>
</comment>
<proteinExistence type="inferred from homology"/>
<keyword id="KW-1185">Reference proteome</keyword>
<sequence>MPLPGFTKSDFETFLIDGLEERMAAIRSNIQPKFQVIGAELRDELSTLLGNEMFLHIAQHARRTTNPPNDTWLAVAGNKRGYKKHPHFQVGLFDDHLFIWLAFIYELPEKGNIAKTFLENKPLIEEVVPSDYVVSIDHTKKEANPLSELDLTQSLERFRDVKKAEWLVGRHFAKGSETVENGEQLMEAIRQTVKTLLPLYQLSLTAGAPTR</sequence>
<reference key="1">
    <citation type="submission" date="2003-10" db="EMBL/GenBank/DDBJ databases">
        <title>The complete genome sequence of the alkaliphilic Bacillus clausii KSM-K16.</title>
        <authorList>
            <person name="Takaki Y."/>
            <person name="Kageyama Y."/>
            <person name="Shimamura S."/>
            <person name="Suzuki H."/>
            <person name="Nishi S."/>
            <person name="Hatada Y."/>
            <person name="Kawai S."/>
            <person name="Ito S."/>
            <person name="Horikoshi K."/>
        </authorList>
    </citation>
    <scope>NUCLEOTIDE SEQUENCE [LARGE SCALE GENOMIC DNA]</scope>
    <source>
        <strain>KSM-K16</strain>
    </source>
</reference>
<protein>
    <recommendedName>
        <fullName evidence="1">UPF0637 protein ABC2405</fullName>
    </recommendedName>
</protein>
<accession>Q5WFC0</accession>
<evidence type="ECO:0000255" key="1">
    <source>
        <dbReference type="HAMAP-Rule" id="MF_01851"/>
    </source>
</evidence>
<gene>
    <name type="ordered locus">ABC2405</name>
</gene>